<feature type="chain" id="PRO_0000201191" description="Probable acyl-CoA dehydrogenase 6">
    <location>
        <begin position="1"/>
        <end position="408"/>
    </location>
</feature>
<feature type="active site" description="Proton acceptor" evidence="1">
    <location>
        <position position="265"/>
    </location>
</feature>
<dbReference type="EC" id="1.3.8.4"/>
<dbReference type="EMBL" id="FO080279">
    <property type="protein sequence ID" value="CCD62557.1"/>
    <property type="molecule type" value="Genomic_DNA"/>
</dbReference>
<dbReference type="PIR" id="S44743">
    <property type="entry name" value="S44743"/>
</dbReference>
<dbReference type="RefSeq" id="NP_498885.1">
    <property type="nucleotide sequence ID" value="NM_066484.2"/>
</dbReference>
<dbReference type="SMR" id="P34275"/>
<dbReference type="BioGRID" id="46973">
    <property type="interactions" value="1"/>
</dbReference>
<dbReference type="FunCoup" id="P34275">
    <property type="interactions" value="82"/>
</dbReference>
<dbReference type="STRING" id="6239.C02D5.1.1"/>
<dbReference type="PaxDb" id="6239-C02D5.1"/>
<dbReference type="PeptideAtlas" id="P34275"/>
<dbReference type="EnsemblMetazoa" id="C02D5.1.1">
    <property type="protein sequence ID" value="C02D5.1.1"/>
    <property type="gene ID" value="WBGene00015335"/>
</dbReference>
<dbReference type="GeneID" id="182112"/>
<dbReference type="KEGG" id="cel:CELE_C02D5.1"/>
<dbReference type="UCSC" id="C02D5.1">
    <property type="organism name" value="c. elegans"/>
</dbReference>
<dbReference type="AGR" id="WB:WBGene00015335"/>
<dbReference type="CTD" id="182112"/>
<dbReference type="WormBase" id="C02D5.1">
    <property type="protein sequence ID" value="CE24778"/>
    <property type="gene ID" value="WBGene00015335"/>
    <property type="gene designation" value="acdh-6"/>
</dbReference>
<dbReference type="eggNOG" id="KOG0139">
    <property type="taxonomic scope" value="Eukaryota"/>
</dbReference>
<dbReference type="GeneTree" id="ENSGT00940000164410"/>
<dbReference type="HOGENOM" id="CLU_018204_0_3_1"/>
<dbReference type="InParanoid" id="P34275"/>
<dbReference type="OMA" id="YQCEKMG"/>
<dbReference type="OrthoDB" id="10262177at2759"/>
<dbReference type="PhylomeDB" id="P34275"/>
<dbReference type="UniPathway" id="UPA00363">
    <property type="reaction ID" value="UER00860"/>
</dbReference>
<dbReference type="PRO" id="PR:P34275"/>
<dbReference type="Proteomes" id="UP000001940">
    <property type="component" value="Chromosome III"/>
</dbReference>
<dbReference type="Bgee" id="WBGene00015335">
    <property type="expression patterns" value="Expressed in embryo and 3 other cell types or tissues"/>
</dbReference>
<dbReference type="GO" id="GO:0005737">
    <property type="term" value="C:cytoplasm"/>
    <property type="evidence" value="ECO:0000318"/>
    <property type="project" value="GO_Central"/>
</dbReference>
<dbReference type="GO" id="GO:0043231">
    <property type="term" value="C:intracellular membrane-bounded organelle"/>
    <property type="evidence" value="ECO:0007669"/>
    <property type="project" value="UniProtKB-ARBA"/>
</dbReference>
<dbReference type="GO" id="GO:0008470">
    <property type="term" value="F:3-methylbutanoyl-CoA dehydrogenase activity"/>
    <property type="evidence" value="ECO:0007669"/>
    <property type="project" value="UniProtKB-EC"/>
</dbReference>
<dbReference type="GO" id="GO:0003995">
    <property type="term" value="F:acyl-CoA dehydrogenase activity"/>
    <property type="evidence" value="ECO:0000318"/>
    <property type="project" value="GO_Central"/>
</dbReference>
<dbReference type="GO" id="GO:0050660">
    <property type="term" value="F:flavin adenine dinucleotide binding"/>
    <property type="evidence" value="ECO:0000318"/>
    <property type="project" value="GO_Central"/>
</dbReference>
<dbReference type="GO" id="GO:0033539">
    <property type="term" value="P:fatty acid beta-oxidation using acyl-CoA dehydrogenase"/>
    <property type="evidence" value="ECO:0000318"/>
    <property type="project" value="GO_Central"/>
</dbReference>
<dbReference type="GO" id="GO:0006552">
    <property type="term" value="P:L-leucine catabolic process"/>
    <property type="evidence" value="ECO:0007669"/>
    <property type="project" value="UniProtKB-UniPathway"/>
</dbReference>
<dbReference type="CDD" id="cd00567">
    <property type="entry name" value="ACAD"/>
    <property type="match status" value="1"/>
</dbReference>
<dbReference type="FunFam" id="2.40.110.10:FF:000002">
    <property type="entry name" value="Acyl-CoA dehydrogenase fadE12"/>
    <property type="match status" value="1"/>
</dbReference>
<dbReference type="Gene3D" id="1.10.540.10">
    <property type="entry name" value="Acyl-CoA dehydrogenase/oxidase, N-terminal domain"/>
    <property type="match status" value="1"/>
</dbReference>
<dbReference type="Gene3D" id="2.40.110.10">
    <property type="entry name" value="Butyryl-CoA Dehydrogenase, subunit A, domain 2"/>
    <property type="match status" value="1"/>
</dbReference>
<dbReference type="Gene3D" id="1.20.140.10">
    <property type="entry name" value="Butyryl-CoA Dehydrogenase, subunit A, domain 3"/>
    <property type="match status" value="1"/>
</dbReference>
<dbReference type="InterPro" id="IPR050741">
    <property type="entry name" value="Acyl-CoA_dehydrogenase"/>
</dbReference>
<dbReference type="InterPro" id="IPR006089">
    <property type="entry name" value="Acyl-CoA_DH_CS"/>
</dbReference>
<dbReference type="InterPro" id="IPR006091">
    <property type="entry name" value="Acyl-CoA_Oxase/DH_mid-dom"/>
</dbReference>
<dbReference type="InterPro" id="IPR046373">
    <property type="entry name" value="Acyl-CoA_Oxase/DH_mid-dom_sf"/>
</dbReference>
<dbReference type="InterPro" id="IPR036250">
    <property type="entry name" value="AcylCo_DH-like_C"/>
</dbReference>
<dbReference type="InterPro" id="IPR009075">
    <property type="entry name" value="AcylCo_DH/oxidase_C"/>
</dbReference>
<dbReference type="InterPro" id="IPR013786">
    <property type="entry name" value="AcylCoA_DH/ox_N"/>
</dbReference>
<dbReference type="InterPro" id="IPR037069">
    <property type="entry name" value="AcylCoA_DH/ox_N_sf"/>
</dbReference>
<dbReference type="InterPro" id="IPR009100">
    <property type="entry name" value="AcylCoA_DH/oxidase_NM_dom_sf"/>
</dbReference>
<dbReference type="PANTHER" id="PTHR48083:SF6">
    <property type="entry name" value="ACYL-COA DEHYDROGENASE 6"/>
    <property type="match status" value="1"/>
</dbReference>
<dbReference type="PANTHER" id="PTHR48083">
    <property type="entry name" value="MEDIUM-CHAIN SPECIFIC ACYL-COA DEHYDROGENASE, MITOCHONDRIAL-RELATED"/>
    <property type="match status" value="1"/>
</dbReference>
<dbReference type="Pfam" id="PF00441">
    <property type="entry name" value="Acyl-CoA_dh_1"/>
    <property type="match status" value="1"/>
</dbReference>
<dbReference type="Pfam" id="PF02770">
    <property type="entry name" value="Acyl-CoA_dh_M"/>
    <property type="match status" value="1"/>
</dbReference>
<dbReference type="Pfam" id="PF02771">
    <property type="entry name" value="Acyl-CoA_dh_N"/>
    <property type="match status" value="1"/>
</dbReference>
<dbReference type="PIRSF" id="PIRSF016578">
    <property type="entry name" value="HsaA"/>
    <property type="match status" value="1"/>
</dbReference>
<dbReference type="SUPFAM" id="SSF47203">
    <property type="entry name" value="Acyl-CoA dehydrogenase C-terminal domain-like"/>
    <property type="match status" value="1"/>
</dbReference>
<dbReference type="SUPFAM" id="SSF56645">
    <property type="entry name" value="Acyl-CoA dehydrogenase NM domain-like"/>
    <property type="match status" value="1"/>
</dbReference>
<dbReference type="PROSITE" id="PS00072">
    <property type="entry name" value="ACYL_COA_DH_1"/>
    <property type="match status" value="1"/>
</dbReference>
<dbReference type="PROSITE" id="PS00073">
    <property type="entry name" value="ACYL_COA_DH_2"/>
    <property type="match status" value="1"/>
</dbReference>
<protein>
    <recommendedName>
        <fullName>Probable acyl-CoA dehydrogenase 6</fullName>
    </recommendedName>
    <alternativeName>
        <fullName>Probable isovaleryl-CoA dehydrogenase</fullName>
        <shortName>IVD</shortName>
        <ecNumber>1.3.8.4</ecNumber>
    </alternativeName>
</protein>
<accession>P34275</accession>
<sequence>MAFLARKTSSLLPATTSSTVKHMIYDEPHFAMQNSLAKLIKEKINPNVAQWEKSGRYPAHFVFKMLGQLGVFAVNKPVDYGGTGRDFAMSIAIAEQIGAVDCGSIPMSVMVQSDMSTPALAQFGSDSLRNRFLRPSINGDLVSSIAVSEPHAGSDVSAIRTHARRYGSDLIINGSKMWITNGDQADWACVLVNTSNAKNLHKNKSLVCIPLDSIGVHRSTPLDKLGMRSSDTVQLFFEDVRVPSSYIIGEEGRGFAYQMNQFNDERLVTVAVGLLPLQKCINETIEYARERLIFGKTLLDQQYVQFRLAELEAELEATRSLLYRTVLARCQGEDVSMLTAMAKLKIGRLARKVTDQCLQIWGGAGYLNDNGISRAFRDFRIFSIGAGCDEVMMQIIHKTQSKRQQKRI</sequence>
<proteinExistence type="inferred from homology"/>
<gene>
    <name type="primary">acdh-6</name>
    <name type="ORF">C02D5.1</name>
</gene>
<comment type="catalytic activity">
    <reaction>
        <text>3-methylbutanoyl-CoA + oxidized [electron-transfer flavoprotein] + H(+) = 3-methylbut-2-enoyl-CoA + reduced [electron-transfer flavoprotein]</text>
        <dbReference type="Rhea" id="RHEA:12276"/>
        <dbReference type="Rhea" id="RHEA-COMP:10685"/>
        <dbReference type="Rhea" id="RHEA-COMP:10686"/>
        <dbReference type="ChEBI" id="CHEBI:15378"/>
        <dbReference type="ChEBI" id="CHEBI:57344"/>
        <dbReference type="ChEBI" id="CHEBI:57345"/>
        <dbReference type="ChEBI" id="CHEBI:57692"/>
        <dbReference type="ChEBI" id="CHEBI:58307"/>
        <dbReference type="EC" id="1.3.8.4"/>
    </reaction>
</comment>
<comment type="cofactor">
    <cofactor>
        <name>FAD</name>
        <dbReference type="ChEBI" id="CHEBI:57692"/>
    </cofactor>
</comment>
<comment type="pathway">
    <text>Amino-acid degradation; L-leucine degradation; (S)-3-hydroxy-3-methylglutaryl-CoA from 3-isovaleryl-CoA: step 1/3.</text>
</comment>
<comment type="subunit">
    <text evidence="1">Homotetramer.</text>
</comment>
<comment type="similarity">
    <text evidence="2">Belongs to the acyl-CoA dehydrogenase family.</text>
</comment>
<reference key="1">
    <citation type="journal article" date="1994" name="Nature">
        <title>2.2 Mb of contiguous nucleotide sequence from chromosome III of C. elegans.</title>
        <authorList>
            <person name="Wilson R."/>
            <person name="Ainscough R."/>
            <person name="Anderson K."/>
            <person name="Baynes C."/>
            <person name="Berks M."/>
            <person name="Bonfield J."/>
            <person name="Burton J."/>
            <person name="Connell M."/>
            <person name="Copsey T."/>
            <person name="Cooper J."/>
            <person name="Coulson A."/>
            <person name="Craxton M."/>
            <person name="Dear S."/>
            <person name="Du Z."/>
            <person name="Durbin R."/>
            <person name="Favello A."/>
            <person name="Fraser A."/>
            <person name="Fulton L."/>
            <person name="Gardner A."/>
            <person name="Green P."/>
            <person name="Hawkins T."/>
            <person name="Hillier L."/>
            <person name="Jier M."/>
            <person name="Johnston L."/>
            <person name="Jones M."/>
            <person name="Kershaw J."/>
            <person name="Kirsten J."/>
            <person name="Laisster N."/>
            <person name="Latreille P."/>
            <person name="Lightning J."/>
            <person name="Lloyd C."/>
            <person name="Mortimore B."/>
            <person name="O'Callaghan M."/>
            <person name="Parsons J."/>
            <person name="Percy C."/>
            <person name="Rifken L."/>
            <person name="Roopra A."/>
            <person name="Saunders D."/>
            <person name="Shownkeen R."/>
            <person name="Sims M."/>
            <person name="Smaldon N."/>
            <person name="Smith A."/>
            <person name="Smith M."/>
            <person name="Sonnhammer E."/>
            <person name="Staden R."/>
            <person name="Sulston J."/>
            <person name="Thierry-Mieg J."/>
            <person name="Thomas K."/>
            <person name="Vaudin M."/>
            <person name="Vaughan K."/>
            <person name="Waterston R."/>
            <person name="Watson A."/>
            <person name="Weinstock L."/>
            <person name="Wilkinson-Sproat J."/>
            <person name="Wohldman P."/>
        </authorList>
    </citation>
    <scope>NUCLEOTIDE SEQUENCE [LARGE SCALE GENOMIC DNA]</scope>
    <source>
        <strain>Bristol N2</strain>
    </source>
</reference>
<reference key="2">
    <citation type="journal article" date="1998" name="Science">
        <title>Genome sequence of the nematode C. elegans: a platform for investigating biology.</title>
        <authorList>
            <consortium name="The C. elegans sequencing consortium"/>
        </authorList>
    </citation>
    <scope>NUCLEOTIDE SEQUENCE [LARGE SCALE GENOMIC DNA]</scope>
    <source>
        <strain>Bristol N2</strain>
    </source>
</reference>
<name>IVD_CAEEL</name>
<evidence type="ECO:0000250" key="1"/>
<evidence type="ECO:0000305" key="2"/>
<keyword id="KW-0274">FAD</keyword>
<keyword id="KW-0285">Flavoprotein</keyword>
<keyword id="KW-0560">Oxidoreductase</keyword>
<keyword id="KW-1185">Reference proteome</keyword>
<organism>
    <name type="scientific">Caenorhabditis elegans</name>
    <dbReference type="NCBI Taxonomy" id="6239"/>
    <lineage>
        <taxon>Eukaryota</taxon>
        <taxon>Metazoa</taxon>
        <taxon>Ecdysozoa</taxon>
        <taxon>Nematoda</taxon>
        <taxon>Chromadorea</taxon>
        <taxon>Rhabditida</taxon>
        <taxon>Rhabditina</taxon>
        <taxon>Rhabditomorpha</taxon>
        <taxon>Rhabditoidea</taxon>
        <taxon>Rhabditidae</taxon>
        <taxon>Peloderinae</taxon>
        <taxon>Caenorhabditis</taxon>
    </lineage>
</organism>